<name>VSP1_BORHE</name>
<proteinExistence type="inferred from homology"/>
<protein>
    <recommendedName>
        <fullName evidence="6">Variable small protein 1</fullName>
    </recommendedName>
</protein>
<geneLocation type="plasmid" evidence="10"/>
<organism>
    <name type="scientific">Borrelia hermsii</name>
    <dbReference type="NCBI Taxonomy" id="140"/>
    <lineage>
        <taxon>Bacteria</taxon>
        <taxon>Pseudomonadati</taxon>
        <taxon>Spirochaetota</taxon>
        <taxon>Spirochaetia</taxon>
        <taxon>Spirochaetales</taxon>
        <taxon>Borreliaceae</taxon>
        <taxon>Borrelia</taxon>
    </lineage>
</organism>
<accession>Q45208</accession>
<accession>Q53329</accession>
<sequence>MRKRISAIIMTLFMVFMSCNNGGPELKSDEVAKSDGTVLDLAKISAKIKEASAFAASVKEVHTLVKSVDTLAGAIGKKIKSDGKFDAMAGKNGSLLAGAYNVALDINSKLTVLDGKAGLSSLLKAKVTAAKTSGESFSNKLKTEHTDLGKEEASDDNAKAALLVTNATKNKGVTELEALNTAVDALLKAAEGEVEAAIKELTAPVKVEKPSQNN</sequence>
<comment type="function">
    <text evidence="1">The Vlp and Vsp proteins are antigenically distinct proteins, only one vlp or vsp gene is transcriptionally active at any one time. Switching between these genes is a mechanism of host immune response evasion.</text>
</comment>
<comment type="subcellular location">
    <subcellularLocation>
        <location evidence="1">Cell outer membrane</location>
        <topology>Lipid-anchor</topology>
    </subcellularLocation>
</comment>
<comment type="miscellaneous">
    <text evidence="8">Genes for both Vlp and Vsp families are on (usually) unnamed linear plasmids in B.hermsii HS1.</text>
</comment>
<comment type="similarity">
    <text evidence="4">Belongs to the variable small protein (Vsp) family.</text>
</comment>
<dbReference type="EMBL" id="S62751">
    <property type="protein sequence ID" value="AAB27190.1"/>
    <property type="molecule type" value="Genomic_DNA"/>
</dbReference>
<dbReference type="EMBL" id="L33870">
    <property type="protein sequence ID" value="AAA59217.1"/>
    <property type="molecule type" value="Genomic_DNA"/>
</dbReference>
<dbReference type="PIR" id="I40301">
    <property type="entry name" value="I40301"/>
</dbReference>
<dbReference type="RefSeq" id="WP_015633341.1">
    <property type="nucleotide sequence ID" value="NZ_CP161009.1"/>
</dbReference>
<dbReference type="SMR" id="Q45208"/>
<dbReference type="OrthoDB" id="351187at2"/>
<dbReference type="GO" id="GO:0009279">
    <property type="term" value="C:cell outer membrane"/>
    <property type="evidence" value="ECO:0007669"/>
    <property type="project" value="UniProtKB-SubCell"/>
</dbReference>
<dbReference type="Gene3D" id="1.20.120.240">
    <property type="entry name" value="Lipoprotein, type 6"/>
    <property type="match status" value="1"/>
</dbReference>
<dbReference type="InterPro" id="IPR001800">
    <property type="entry name" value="Lipoprotein_OspC"/>
</dbReference>
<dbReference type="InterPro" id="IPR036437">
    <property type="entry name" value="OspC-like_sf"/>
</dbReference>
<dbReference type="Pfam" id="PF01441">
    <property type="entry name" value="Lipoprotein_6"/>
    <property type="match status" value="1"/>
</dbReference>
<dbReference type="SUPFAM" id="SSF63515">
    <property type="entry name" value="Outer surface protein C (OspC)"/>
    <property type="match status" value="1"/>
</dbReference>
<dbReference type="PROSITE" id="PS51257">
    <property type="entry name" value="PROKAR_LIPOPROTEIN"/>
    <property type="match status" value="1"/>
</dbReference>
<evidence type="ECO:0000250" key="1">
    <source>
        <dbReference type="UniProtKB" id="P21875"/>
    </source>
</evidence>
<evidence type="ECO:0000255" key="2"/>
<evidence type="ECO:0000255" key="3">
    <source>
        <dbReference type="PROSITE-ProRule" id="PRU00303"/>
    </source>
</evidence>
<evidence type="ECO:0000269" key="4">
    <source>
    </source>
</evidence>
<evidence type="ECO:0000303" key="5">
    <source>
    </source>
</evidence>
<evidence type="ECO:0000303" key="6">
    <source>
    </source>
</evidence>
<evidence type="ECO:0000305" key="7"/>
<evidence type="ECO:0000305" key="8">
    <source>
    </source>
</evidence>
<evidence type="ECO:0000312" key="9">
    <source>
        <dbReference type="EMBL" id="AAA59217.1"/>
    </source>
</evidence>
<evidence type="ECO:0000312" key="10">
    <source>
        <dbReference type="EMBL" id="AAB27190.1"/>
    </source>
</evidence>
<feature type="signal peptide" evidence="3">
    <location>
        <begin position="1"/>
        <end position="18"/>
    </location>
</feature>
<feature type="chain" id="PRO_0000244509" description="Variable small protein 1" evidence="2">
    <location>
        <begin position="19"/>
        <end position="214"/>
    </location>
</feature>
<feature type="lipid moiety-binding region" description="N-palmitoyl cysteine" evidence="2 7">
    <location>
        <position position="19"/>
    </location>
</feature>
<feature type="lipid moiety-binding region" description="S-diacylglycerol cysteine" evidence="2 7">
    <location>
        <position position="19"/>
    </location>
</feature>
<feature type="sequence conflict" description="In Ref. 1; AAB27190." evidence="7" ref="1">
    <original>H</original>
    <variation>Q</variation>
    <location>
        <position position="62"/>
    </location>
</feature>
<feature type="sequence conflict" description="In Ref. 1; AAB27190." evidence="7" ref="1">
    <original>L</original>
    <variation>I</variation>
    <location>
        <position position="96"/>
    </location>
</feature>
<gene>
    <name evidence="6" type="primary">vsp1</name>
    <name evidence="5" type="synonym">vmp1</name>
</gene>
<reference evidence="10" key="1">
    <citation type="journal article" date="1993" name="J. Infect. Dis.">
        <title>Experimental infection of the mouse brain by a relapsing fever Borrelia species: a molecular analysis.</title>
        <authorList>
            <person name="Cadavid D."/>
            <person name="Bundoc V."/>
            <person name="Barbour A.G."/>
        </authorList>
    </citation>
    <scope>NUCLEOTIDE SEQUENCE [GENOMIC DNA]</scope>
    <source>
        <strain>ATCC 35209 / HS1</strain>
    </source>
</reference>
<reference evidence="9" key="2">
    <citation type="journal article" date="1994" name="Cell">
        <title>Antigen diversity in the bacterium B. hermsii through 'somatic' mutations in rearranged vmp genes.</title>
        <authorList>
            <person name="Restrepo B.I."/>
            <person name="Barbour A.G."/>
        </authorList>
    </citation>
    <scope>NUCLEOTIDE SEQUENCE [GENOMIC DNA]</scope>
    <source>
        <strain>ATCC 35209 / HS1</strain>
    </source>
</reference>
<reference evidence="7" key="3">
    <citation type="journal article" date="1998" name="Infect. Immun.">
        <title>Population structure of the relapsing fever spirochete Borrelia hermsii as indicated by polymorphism of two multigene families that encode immunogenic outer surface lipoproteins.</title>
        <authorList>
            <person name="Hinnebusch B.J."/>
            <person name="Barbour A.G."/>
            <person name="Restrepo B.I."/>
            <person name="Schwan T.G."/>
        </authorList>
    </citation>
    <scope>NOMENCLATURE</scope>
</reference>
<keyword id="KW-0998">Cell outer membrane</keyword>
<keyword id="KW-0449">Lipoprotein</keyword>
<keyword id="KW-0472">Membrane</keyword>
<keyword id="KW-0564">Palmitate</keyword>
<keyword id="KW-0614">Plasmid</keyword>
<keyword id="KW-0732">Signal</keyword>